<organism>
    <name type="scientific">Mycobacterium leprae (strain TN)</name>
    <dbReference type="NCBI Taxonomy" id="272631"/>
    <lineage>
        <taxon>Bacteria</taxon>
        <taxon>Bacillati</taxon>
        <taxon>Actinomycetota</taxon>
        <taxon>Actinomycetes</taxon>
        <taxon>Mycobacteriales</taxon>
        <taxon>Mycobacteriaceae</taxon>
        <taxon>Mycobacterium</taxon>
    </lineage>
</organism>
<proteinExistence type="inferred from homology"/>
<dbReference type="EC" id="3.4.11.1"/>
<dbReference type="EC" id="3.4.11.10"/>
<dbReference type="EMBL" id="Z98741">
    <property type="protein sequence ID" value="CAB11379.1"/>
    <property type="molecule type" value="Genomic_DNA"/>
</dbReference>
<dbReference type="EMBL" id="AL583920">
    <property type="protein sequence ID" value="CAC31245.1"/>
    <property type="molecule type" value="Genomic_DNA"/>
</dbReference>
<dbReference type="PIR" id="T44889">
    <property type="entry name" value="T44889"/>
</dbReference>
<dbReference type="RefSeq" id="NP_301652.1">
    <property type="nucleotide sequence ID" value="NC_002677.1"/>
</dbReference>
<dbReference type="SMR" id="O32956"/>
<dbReference type="STRING" id="272631.gene:17574690"/>
<dbReference type="KEGG" id="mle:ML0864"/>
<dbReference type="PATRIC" id="fig|272631.5.peg.1591"/>
<dbReference type="Leproma" id="ML0864"/>
<dbReference type="eggNOG" id="COG0260">
    <property type="taxonomic scope" value="Bacteria"/>
</dbReference>
<dbReference type="HOGENOM" id="CLU_013734_2_0_11"/>
<dbReference type="OrthoDB" id="9809354at2"/>
<dbReference type="Proteomes" id="UP000000806">
    <property type="component" value="Chromosome"/>
</dbReference>
<dbReference type="GO" id="GO:0005737">
    <property type="term" value="C:cytoplasm"/>
    <property type="evidence" value="ECO:0007669"/>
    <property type="project" value="UniProtKB-SubCell"/>
</dbReference>
<dbReference type="GO" id="GO:0030145">
    <property type="term" value="F:manganese ion binding"/>
    <property type="evidence" value="ECO:0007669"/>
    <property type="project" value="UniProtKB-UniRule"/>
</dbReference>
<dbReference type="GO" id="GO:0070006">
    <property type="term" value="F:metalloaminopeptidase activity"/>
    <property type="evidence" value="ECO:0007669"/>
    <property type="project" value="InterPro"/>
</dbReference>
<dbReference type="GO" id="GO:0006508">
    <property type="term" value="P:proteolysis"/>
    <property type="evidence" value="ECO:0007669"/>
    <property type="project" value="UniProtKB-KW"/>
</dbReference>
<dbReference type="CDD" id="cd00433">
    <property type="entry name" value="Peptidase_M17"/>
    <property type="match status" value="1"/>
</dbReference>
<dbReference type="Gene3D" id="3.40.220.10">
    <property type="entry name" value="Leucine Aminopeptidase, subunit E, domain 1"/>
    <property type="match status" value="1"/>
</dbReference>
<dbReference type="Gene3D" id="3.40.630.10">
    <property type="entry name" value="Zn peptidases"/>
    <property type="match status" value="1"/>
</dbReference>
<dbReference type="HAMAP" id="MF_00181">
    <property type="entry name" value="Cytosol_peptidase_M17"/>
    <property type="match status" value="1"/>
</dbReference>
<dbReference type="InterPro" id="IPR011356">
    <property type="entry name" value="Leucine_aapep/pepB"/>
</dbReference>
<dbReference type="InterPro" id="IPR043472">
    <property type="entry name" value="Macro_dom-like"/>
</dbReference>
<dbReference type="InterPro" id="IPR000819">
    <property type="entry name" value="Peptidase_M17_C"/>
</dbReference>
<dbReference type="InterPro" id="IPR023042">
    <property type="entry name" value="Peptidase_M17_leu_NH2_pept"/>
</dbReference>
<dbReference type="InterPro" id="IPR008283">
    <property type="entry name" value="Peptidase_M17_N"/>
</dbReference>
<dbReference type="NCBIfam" id="NF002073">
    <property type="entry name" value="PRK00913.1-2"/>
    <property type="match status" value="1"/>
</dbReference>
<dbReference type="PANTHER" id="PTHR11963:SF23">
    <property type="entry name" value="CYTOSOL AMINOPEPTIDASE"/>
    <property type="match status" value="1"/>
</dbReference>
<dbReference type="PANTHER" id="PTHR11963">
    <property type="entry name" value="LEUCINE AMINOPEPTIDASE-RELATED"/>
    <property type="match status" value="1"/>
</dbReference>
<dbReference type="Pfam" id="PF00883">
    <property type="entry name" value="Peptidase_M17"/>
    <property type="match status" value="1"/>
</dbReference>
<dbReference type="Pfam" id="PF02789">
    <property type="entry name" value="Peptidase_M17_N"/>
    <property type="match status" value="1"/>
</dbReference>
<dbReference type="PRINTS" id="PR00481">
    <property type="entry name" value="LAMNOPPTDASE"/>
</dbReference>
<dbReference type="SUPFAM" id="SSF52949">
    <property type="entry name" value="Macro domain-like"/>
    <property type="match status" value="1"/>
</dbReference>
<dbReference type="SUPFAM" id="SSF53187">
    <property type="entry name" value="Zn-dependent exopeptidases"/>
    <property type="match status" value="1"/>
</dbReference>
<dbReference type="PROSITE" id="PS00631">
    <property type="entry name" value="CYTOSOL_AP"/>
    <property type="match status" value="1"/>
</dbReference>
<keyword id="KW-0031">Aminopeptidase</keyword>
<keyword id="KW-0963">Cytoplasm</keyword>
<keyword id="KW-0378">Hydrolase</keyword>
<keyword id="KW-0464">Manganese</keyword>
<keyword id="KW-0479">Metal-binding</keyword>
<keyword id="KW-0645">Protease</keyword>
<keyword id="KW-1185">Reference proteome</keyword>
<protein>
    <recommendedName>
        <fullName>Probable cytosol aminopeptidase</fullName>
        <ecNumber>3.4.11.1</ecNumber>
    </recommendedName>
    <alternativeName>
        <fullName>Leucine aminopeptidase</fullName>
        <shortName>LAP</shortName>
        <ecNumber>3.4.11.10</ecNumber>
    </alternativeName>
    <alternativeName>
        <fullName>Leucyl aminopeptidase</fullName>
    </alternativeName>
</protein>
<reference key="1">
    <citation type="journal article" date="2001" name="Nature">
        <title>Massive gene decay in the leprosy bacillus.</title>
        <authorList>
            <person name="Cole S.T."/>
            <person name="Eiglmeier K."/>
            <person name="Parkhill J."/>
            <person name="James K.D."/>
            <person name="Thomson N.R."/>
            <person name="Wheeler P.R."/>
            <person name="Honore N."/>
            <person name="Garnier T."/>
            <person name="Churcher C.M."/>
            <person name="Harris D.E."/>
            <person name="Mungall K.L."/>
            <person name="Basham D."/>
            <person name="Brown D."/>
            <person name="Chillingworth T."/>
            <person name="Connor R."/>
            <person name="Davies R.M."/>
            <person name="Devlin K."/>
            <person name="Duthoy S."/>
            <person name="Feltwell T."/>
            <person name="Fraser A."/>
            <person name="Hamlin N."/>
            <person name="Holroyd S."/>
            <person name="Hornsby T."/>
            <person name="Jagels K."/>
            <person name="Lacroix C."/>
            <person name="Maclean J."/>
            <person name="Moule S."/>
            <person name="Murphy L.D."/>
            <person name="Oliver K."/>
            <person name="Quail M.A."/>
            <person name="Rajandream M.A."/>
            <person name="Rutherford K.M."/>
            <person name="Rutter S."/>
            <person name="Seeger K."/>
            <person name="Simon S."/>
            <person name="Simmonds M."/>
            <person name="Skelton J."/>
            <person name="Squares R."/>
            <person name="Squares S."/>
            <person name="Stevens K."/>
            <person name="Taylor K."/>
            <person name="Whitehead S."/>
            <person name="Woodward J.R."/>
            <person name="Barrell B.G."/>
        </authorList>
    </citation>
    <scope>NUCLEOTIDE SEQUENCE [LARGE SCALE GENOMIC DNA]</scope>
    <source>
        <strain>TN</strain>
    </source>
</reference>
<comment type="function">
    <text evidence="1">Presumably involved in the processing and regular turnover of intracellular proteins. Catalyzes the removal of unsubstituted N-terminal amino acids from various peptides (By similarity).</text>
</comment>
<comment type="catalytic activity">
    <reaction>
        <text>Release of an N-terminal amino acid, Xaa-|-Yaa-, in which Xaa is preferably Leu, but may be other amino acids including Pro although not Arg or Lys, and Yaa may be Pro. Amino acid amides and methyl esters are also readily hydrolyzed, but rates on arylamides are exceedingly low.</text>
        <dbReference type="EC" id="3.4.11.1"/>
    </reaction>
</comment>
<comment type="catalytic activity">
    <reaction>
        <text>Release of an N-terminal amino acid, preferentially leucine, but not glutamic or aspartic acids.</text>
        <dbReference type="EC" id="3.4.11.10"/>
    </reaction>
</comment>
<comment type="cofactor">
    <cofactor evidence="1">
        <name>Mn(2+)</name>
        <dbReference type="ChEBI" id="CHEBI:29035"/>
    </cofactor>
    <text evidence="1">Binds 2 manganese ions per subunit.</text>
</comment>
<comment type="subcellular location">
    <subcellularLocation>
        <location evidence="1">Cytoplasm</location>
    </subcellularLocation>
</comment>
<comment type="similarity">
    <text evidence="3">Belongs to the peptidase M17 family.</text>
</comment>
<gene>
    <name type="primary">pepA</name>
    <name type="ordered locus">ML0864</name>
    <name type="ORF">MLCB22.14</name>
</gene>
<feature type="chain" id="PRO_0000165770" description="Probable cytosol aminopeptidase">
    <location>
        <begin position="1"/>
        <end position="524"/>
    </location>
</feature>
<feature type="active site" evidence="2">
    <location>
        <position position="300"/>
    </location>
</feature>
<feature type="active site" evidence="2">
    <location>
        <position position="374"/>
    </location>
</feature>
<feature type="binding site" evidence="1">
    <location>
        <position position="288"/>
    </location>
    <ligand>
        <name>Mn(2+)</name>
        <dbReference type="ChEBI" id="CHEBI:29035"/>
        <label>2</label>
    </ligand>
</feature>
<feature type="binding site" evidence="1">
    <location>
        <position position="293"/>
    </location>
    <ligand>
        <name>Mn(2+)</name>
        <dbReference type="ChEBI" id="CHEBI:29035"/>
        <label>1</label>
    </ligand>
</feature>
<feature type="binding site" evidence="1">
    <location>
        <position position="293"/>
    </location>
    <ligand>
        <name>Mn(2+)</name>
        <dbReference type="ChEBI" id="CHEBI:29035"/>
        <label>2</label>
    </ligand>
</feature>
<feature type="binding site" evidence="1">
    <location>
        <position position="311"/>
    </location>
    <ligand>
        <name>Mn(2+)</name>
        <dbReference type="ChEBI" id="CHEBI:29035"/>
        <label>2</label>
    </ligand>
</feature>
<feature type="binding site" evidence="1">
    <location>
        <position position="370"/>
    </location>
    <ligand>
        <name>Mn(2+)</name>
        <dbReference type="ChEBI" id="CHEBI:29035"/>
        <label>1</label>
    </ligand>
</feature>
<feature type="binding site" evidence="1">
    <location>
        <position position="372"/>
    </location>
    <ligand>
        <name>Mn(2+)</name>
        <dbReference type="ChEBI" id="CHEBI:29035"/>
        <label>1</label>
    </ligand>
</feature>
<feature type="binding site" evidence="1">
    <location>
        <position position="372"/>
    </location>
    <ligand>
        <name>Mn(2+)</name>
        <dbReference type="ChEBI" id="CHEBI:29035"/>
        <label>2</label>
    </ligand>
</feature>
<accession>O32956</accession>
<sequence length="524" mass="54342">MPVTTDPGYQGPSVHVAASLPKHDVSSSVLIVPVVSASDSDESEDRPGAVVAAAEPFLTAAAVAEIEAGLRALEATGGSDQVHRLVAPSLPVGSVLTVSLGKPRSEWPADTIRRAAGVAARSLGRAEVVITTLAELPGESGASICSAVVEGLMLGSYRFTDFRSRKTAPKDNGLRKITVLANAKDAKKQSAHGATVASAVATARDLVNTPPSHLFPAEFAKCAKTLGESAGLEVEVLDDKALQKAGYGGVIGVGQGSSRTPRLVRLIHQGSRLAKNPKNARKVALVGKGITFDTGGISIKPAASMHHMTSDMAGAAAVIATITLAAQLKLPIDVVATVPMAENMPSGTAQRPGDVLTQYGGITVEVLNTDAEGRLILADAIVRACQDNPDYLIETSTLTGAQTVALGSRIPGVMGSDKFRDRVAKTSQQVGENGWPMPLPDELKDDLKSTVADLANVSGQRFAGMLVAGAFLREFVADGVDWAHIDIAGPAYNTDSPWGYTPKGATGVPTRTMFAMLEDIANHG</sequence>
<evidence type="ECO:0000250" key="1"/>
<evidence type="ECO:0000255" key="2"/>
<evidence type="ECO:0000305" key="3"/>
<name>AMPA_MYCLE</name>